<feature type="chain" id="PRO_0000347304" description="Unknown protein 17">
    <location>
        <begin position="1" status="less than"/>
        <end position="15" status="greater than"/>
    </location>
</feature>
<feature type="non-terminal residue" evidence="1">
    <location>
        <position position="1"/>
    </location>
</feature>
<feature type="non-terminal residue" evidence="1">
    <location>
        <position position="15"/>
    </location>
</feature>
<accession>P85923</accession>
<proteinExistence type="evidence at protein level"/>
<reference key="1">
    <citation type="journal article" date="2008" name="J. Proteomics">
        <title>A proteomics approach to identify proteins differentially expressed in Douglas-fir seedlings infected by Phellinus sulphurascens.</title>
        <authorList>
            <person name="Islam M.A."/>
            <person name="Sturrock R.N."/>
            <person name="Ekramoddoullah A.K.M."/>
        </authorList>
    </citation>
    <scope>IDENTIFICATION BY MASS SPECTROMETRY</scope>
</reference>
<organism>
    <name type="scientific">Pseudotsuga menziesii</name>
    <name type="common">Douglas-fir</name>
    <name type="synonym">Abies menziesii</name>
    <dbReference type="NCBI Taxonomy" id="3357"/>
    <lineage>
        <taxon>Eukaryota</taxon>
        <taxon>Viridiplantae</taxon>
        <taxon>Streptophyta</taxon>
        <taxon>Embryophyta</taxon>
        <taxon>Tracheophyta</taxon>
        <taxon>Spermatophyta</taxon>
        <taxon>Pinopsida</taxon>
        <taxon>Pinidae</taxon>
        <taxon>Conifers I</taxon>
        <taxon>Pinales</taxon>
        <taxon>Pinaceae</taxon>
        <taxon>Pseudotsuga</taxon>
    </lineage>
</organism>
<name>UP17_PSEMZ</name>
<evidence type="ECO:0000303" key="1">
    <source>
    </source>
</evidence>
<sequence>IYSRLTVSPTGTLNR</sequence>
<protein>
    <recommendedName>
        <fullName>Unknown protein 17</fullName>
    </recommendedName>
</protein>